<keyword id="KW-0010">Activator</keyword>
<keyword id="KW-0217">Developmental protein</keyword>
<keyword id="KW-0238">DNA-binding</keyword>
<keyword id="KW-0371">Homeobox</keyword>
<keyword id="KW-0539">Nucleus</keyword>
<keyword id="KW-1267">Proteomics identification</keyword>
<keyword id="KW-1185">Reference proteome</keyword>
<keyword id="KW-0804">Transcription</keyword>
<keyword id="KW-0805">Transcription regulation</keyword>
<reference key="1">
    <citation type="journal article" date="1995" name="Genomics">
        <title>Isolation of the human MOX2 homeobox gene and localization to chromosome 7p22.1-p21.3.</title>
        <authorList>
            <person name="Grigoriou M."/>
            <person name="Kastrinaki M.-C."/>
            <person name="Modi W."/>
            <person name="Theodorakis K."/>
            <person name="Mankoo B."/>
            <person name="Pachnis V."/>
            <person name="Karagogeos D."/>
        </authorList>
    </citation>
    <scope>NUCLEOTIDE SEQUENCE [MRNA]</scope>
    <scope>VARIANT HIS-80 DEL</scope>
    <source>
        <tissue>Embryo</tissue>
    </source>
</reference>
<reference key="2">
    <citation type="journal article" date="1994" name="Genomics">
        <title>Molecular cloning and localization of the human GAX gene to 7p21.</title>
        <authorList>
            <person name="Lepage D.F."/>
            <person name="Walsh K."/>
        </authorList>
    </citation>
    <scope>NUCLEOTIDE SEQUENCE [MRNA]</scope>
    <scope>VARIANT 79-HIS-HIS-80 DEL</scope>
    <source>
        <tissue>Heart</tissue>
    </source>
</reference>
<reference key="3">
    <citation type="journal article" date="2004" name="Nat. Genet.">
        <title>Complete sequencing and characterization of 21,243 full-length human cDNAs.</title>
        <authorList>
            <person name="Ota T."/>
            <person name="Suzuki Y."/>
            <person name="Nishikawa T."/>
            <person name="Otsuki T."/>
            <person name="Sugiyama T."/>
            <person name="Irie R."/>
            <person name="Wakamatsu A."/>
            <person name="Hayashi K."/>
            <person name="Sato H."/>
            <person name="Nagai K."/>
            <person name="Kimura K."/>
            <person name="Makita H."/>
            <person name="Sekine M."/>
            <person name="Obayashi M."/>
            <person name="Nishi T."/>
            <person name="Shibahara T."/>
            <person name="Tanaka T."/>
            <person name="Ishii S."/>
            <person name="Yamamoto J."/>
            <person name="Saito K."/>
            <person name="Kawai Y."/>
            <person name="Isono Y."/>
            <person name="Nakamura Y."/>
            <person name="Nagahari K."/>
            <person name="Murakami K."/>
            <person name="Yasuda T."/>
            <person name="Iwayanagi T."/>
            <person name="Wagatsuma M."/>
            <person name="Shiratori A."/>
            <person name="Sudo H."/>
            <person name="Hosoiri T."/>
            <person name="Kaku Y."/>
            <person name="Kodaira H."/>
            <person name="Kondo H."/>
            <person name="Sugawara M."/>
            <person name="Takahashi M."/>
            <person name="Kanda K."/>
            <person name="Yokoi T."/>
            <person name="Furuya T."/>
            <person name="Kikkawa E."/>
            <person name="Omura Y."/>
            <person name="Abe K."/>
            <person name="Kamihara K."/>
            <person name="Katsuta N."/>
            <person name="Sato K."/>
            <person name="Tanikawa M."/>
            <person name="Yamazaki M."/>
            <person name="Ninomiya K."/>
            <person name="Ishibashi T."/>
            <person name="Yamashita H."/>
            <person name="Murakawa K."/>
            <person name="Fujimori K."/>
            <person name="Tanai H."/>
            <person name="Kimata M."/>
            <person name="Watanabe M."/>
            <person name="Hiraoka S."/>
            <person name="Chiba Y."/>
            <person name="Ishida S."/>
            <person name="Ono Y."/>
            <person name="Takiguchi S."/>
            <person name="Watanabe S."/>
            <person name="Yosida M."/>
            <person name="Hotuta T."/>
            <person name="Kusano J."/>
            <person name="Kanehori K."/>
            <person name="Takahashi-Fujii A."/>
            <person name="Hara H."/>
            <person name="Tanase T.-O."/>
            <person name="Nomura Y."/>
            <person name="Togiya S."/>
            <person name="Komai F."/>
            <person name="Hara R."/>
            <person name="Takeuchi K."/>
            <person name="Arita M."/>
            <person name="Imose N."/>
            <person name="Musashino K."/>
            <person name="Yuuki H."/>
            <person name="Oshima A."/>
            <person name="Sasaki N."/>
            <person name="Aotsuka S."/>
            <person name="Yoshikawa Y."/>
            <person name="Matsunawa H."/>
            <person name="Ichihara T."/>
            <person name="Shiohata N."/>
            <person name="Sano S."/>
            <person name="Moriya S."/>
            <person name="Momiyama H."/>
            <person name="Satoh N."/>
            <person name="Takami S."/>
            <person name="Terashima Y."/>
            <person name="Suzuki O."/>
            <person name="Nakagawa S."/>
            <person name="Senoh A."/>
            <person name="Mizoguchi H."/>
            <person name="Goto Y."/>
            <person name="Shimizu F."/>
            <person name="Wakebe H."/>
            <person name="Hishigaki H."/>
            <person name="Watanabe T."/>
            <person name="Sugiyama A."/>
            <person name="Takemoto M."/>
            <person name="Kawakami B."/>
            <person name="Yamazaki M."/>
            <person name="Watanabe K."/>
            <person name="Kumagai A."/>
            <person name="Itakura S."/>
            <person name="Fukuzumi Y."/>
            <person name="Fujimori Y."/>
            <person name="Komiyama M."/>
            <person name="Tashiro H."/>
            <person name="Tanigami A."/>
            <person name="Fujiwara T."/>
            <person name="Ono T."/>
            <person name="Yamada K."/>
            <person name="Fujii Y."/>
            <person name="Ozaki K."/>
            <person name="Hirao M."/>
            <person name="Ohmori Y."/>
            <person name="Kawabata A."/>
            <person name="Hikiji T."/>
            <person name="Kobatake N."/>
            <person name="Inagaki H."/>
            <person name="Ikema Y."/>
            <person name="Okamoto S."/>
            <person name="Okitani R."/>
            <person name="Kawakami T."/>
            <person name="Noguchi S."/>
            <person name="Itoh T."/>
            <person name="Shigeta K."/>
            <person name="Senba T."/>
            <person name="Matsumura K."/>
            <person name="Nakajima Y."/>
            <person name="Mizuno T."/>
            <person name="Morinaga M."/>
            <person name="Sasaki M."/>
            <person name="Togashi T."/>
            <person name="Oyama M."/>
            <person name="Hata H."/>
            <person name="Watanabe M."/>
            <person name="Komatsu T."/>
            <person name="Mizushima-Sugano J."/>
            <person name="Satoh T."/>
            <person name="Shirai Y."/>
            <person name="Takahashi Y."/>
            <person name="Nakagawa K."/>
            <person name="Okumura K."/>
            <person name="Nagase T."/>
            <person name="Nomura N."/>
            <person name="Kikuchi H."/>
            <person name="Masuho Y."/>
            <person name="Yamashita R."/>
            <person name="Nakai K."/>
            <person name="Yada T."/>
            <person name="Nakamura Y."/>
            <person name="Ohara O."/>
            <person name="Isogai T."/>
            <person name="Sugano S."/>
        </authorList>
    </citation>
    <scope>NUCLEOTIDE SEQUENCE [LARGE SCALE MRNA]</scope>
    <scope>VARIANT HIS-80 DEL</scope>
    <source>
        <tissue>Trachea</tissue>
    </source>
</reference>
<reference key="4">
    <citation type="journal article" date="2003" name="Nature">
        <title>The DNA sequence of human chromosome 7.</title>
        <authorList>
            <person name="Hillier L.W."/>
            <person name="Fulton R.S."/>
            <person name="Fulton L.A."/>
            <person name="Graves T.A."/>
            <person name="Pepin K.H."/>
            <person name="Wagner-McPherson C."/>
            <person name="Layman D."/>
            <person name="Maas J."/>
            <person name="Jaeger S."/>
            <person name="Walker R."/>
            <person name="Wylie K."/>
            <person name="Sekhon M."/>
            <person name="Becker M.C."/>
            <person name="O'Laughlin M.D."/>
            <person name="Schaller M.E."/>
            <person name="Fewell G.A."/>
            <person name="Delehaunty K.D."/>
            <person name="Miner T.L."/>
            <person name="Nash W.E."/>
            <person name="Cordes M."/>
            <person name="Du H."/>
            <person name="Sun H."/>
            <person name="Edwards J."/>
            <person name="Bradshaw-Cordum H."/>
            <person name="Ali J."/>
            <person name="Andrews S."/>
            <person name="Isak A."/>
            <person name="Vanbrunt A."/>
            <person name="Nguyen C."/>
            <person name="Du F."/>
            <person name="Lamar B."/>
            <person name="Courtney L."/>
            <person name="Kalicki J."/>
            <person name="Ozersky P."/>
            <person name="Bielicki L."/>
            <person name="Scott K."/>
            <person name="Holmes A."/>
            <person name="Harkins R."/>
            <person name="Harris A."/>
            <person name="Strong C.M."/>
            <person name="Hou S."/>
            <person name="Tomlinson C."/>
            <person name="Dauphin-Kohlberg S."/>
            <person name="Kozlowicz-Reilly A."/>
            <person name="Leonard S."/>
            <person name="Rohlfing T."/>
            <person name="Rock S.M."/>
            <person name="Tin-Wollam A.-M."/>
            <person name="Abbott A."/>
            <person name="Minx P."/>
            <person name="Maupin R."/>
            <person name="Strowmatt C."/>
            <person name="Latreille P."/>
            <person name="Miller N."/>
            <person name="Johnson D."/>
            <person name="Murray J."/>
            <person name="Woessner J.P."/>
            <person name="Wendl M.C."/>
            <person name="Yang S.-P."/>
            <person name="Schultz B.R."/>
            <person name="Wallis J.W."/>
            <person name="Spieth J."/>
            <person name="Bieri T.A."/>
            <person name="Nelson J.O."/>
            <person name="Berkowicz N."/>
            <person name="Wohldmann P.E."/>
            <person name="Cook L.L."/>
            <person name="Hickenbotham M.T."/>
            <person name="Eldred J."/>
            <person name="Williams D."/>
            <person name="Bedell J.A."/>
            <person name="Mardis E.R."/>
            <person name="Clifton S.W."/>
            <person name="Chissoe S.L."/>
            <person name="Marra M.A."/>
            <person name="Raymond C."/>
            <person name="Haugen E."/>
            <person name="Gillett W."/>
            <person name="Zhou Y."/>
            <person name="James R."/>
            <person name="Phelps K."/>
            <person name="Iadanoto S."/>
            <person name="Bubb K."/>
            <person name="Simms E."/>
            <person name="Levy R."/>
            <person name="Clendenning J."/>
            <person name="Kaul R."/>
            <person name="Kent W.J."/>
            <person name="Furey T.S."/>
            <person name="Baertsch R.A."/>
            <person name="Brent M.R."/>
            <person name="Keibler E."/>
            <person name="Flicek P."/>
            <person name="Bork P."/>
            <person name="Suyama M."/>
            <person name="Bailey J.A."/>
            <person name="Portnoy M.E."/>
            <person name="Torrents D."/>
            <person name="Chinwalla A.T."/>
            <person name="Gish W.R."/>
            <person name="Eddy S.R."/>
            <person name="McPherson J.D."/>
            <person name="Olson M.V."/>
            <person name="Eichler E.E."/>
            <person name="Green E.D."/>
            <person name="Waterston R.H."/>
            <person name="Wilson R.K."/>
        </authorList>
    </citation>
    <scope>NUCLEOTIDE SEQUENCE [LARGE SCALE GENOMIC DNA]</scope>
</reference>
<reference key="5">
    <citation type="journal article" date="2003" name="Science">
        <title>Human chromosome 7: DNA sequence and biology.</title>
        <authorList>
            <person name="Scherer S.W."/>
            <person name="Cheung J."/>
            <person name="MacDonald J.R."/>
            <person name="Osborne L.R."/>
            <person name="Nakabayashi K."/>
            <person name="Herbrick J.-A."/>
            <person name="Carson A.R."/>
            <person name="Parker-Katiraee L."/>
            <person name="Skaug J."/>
            <person name="Khaja R."/>
            <person name="Zhang J."/>
            <person name="Hudek A.K."/>
            <person name="Li M."/>
            <person name="Haddad M."/>
            <person name="Duggan G.E."/>
            <person name="Fernandez B.A."/>
            <person name="Kanematsu E."/>
            <person name="Gentles S."/>
            <person name="Christopoulos C.C."/>
            <person name="Choufani S."/>
            <person name="Kwasnicka D."/>
            <person name="Zheng X.H."/>
            <person name="Lai Z."/>
            <person name="Nusskern D.R."/>
            <person name="Zhang Q."/>
            <person name="Gu Z."/>
            <person name="Lu F."/>
            <person name="Zeesman S."/>
            <person name="Nowaczyk M.J."/>
            <person name="Teshima I."/>
            <person name="Chitayat D."/>
            <person name="Shuman C."/>
            <person name="Weksberg R."/>
            <person name="Zackai E.H."/>
            <person name="Grebe T.A."/>
            <person name="Cox S.R."/>
            <person name="Kirkpatrick S.J."/>
            <person name="Rahman N."/>
            <person name="Friedman J.M."/>
            <person name="Heng H.H.Q."/>
            <person name="Pelicci P.G."/>
            <person name="Lo-Coco F."/>
            <person name="Belloni E."/>
            <person name="Shaffer L.G."/>
            <person name="Pober B."/>
            <person name="Morton C.C."/>
            <person name="Gusella J.F."/>
            <person name="Bruns G.A.P."/>
            <person name="Korf B.R."/>
            <person name="Quade B.J."/>
            <person name="Ligon A.H."/>
            <person name="Ferguson H."/>
            <person name="Higgins A.W."/>
            <person name="Leach N.T."/>
            <person name="Herrick S.R."/>
            <person name="Lemyre E."/>
            <person name="Farra C.G."/>
            <person name="Kim H.-G."/>
            <person name="Summers A.M."/>
            <person name="Gripp K.W."/>
            <person name="Roberts W."/>
            <person name="Szatmari P."/>
            <person name="Winsor E.J.T."/>
            <person name="Grzeschik K.-H."/>
            <person name="Teebi A."/>
            <person name="Minassian B.A."/>
            <person name="Kere J."/>
            <person name="Armengol L."/>
            <person name="Pujana M.A."/>
            <person name="Estivill X."/>
            <person name="Wilson M.D."/>
            <person name="Koop B.F."/>
            <person name="Tosi S."/>
            <person name="Moore G.E."/>
            <person name="Boright A.P."/>
            <person name="Zlotorynski E."/>
            <person name="Kerem B."/>
            <person name="Kroisel P.M."/>
            <person name="Petek E."/>
            <person name="Oscier D.G."/>
            <person name="Mould S.J."/>
            <person name="Doehner H."/>
            <person name="Doehner K."/>
            <person name="Rommens J.M."/>
            <person name="Vincent J.B."/>
            <person name="Venter J.C."/>
            <person name="Li P.W."/>
            <person name="Mural R.J."/>
            <person name="Adams M.D."/>
            <person name="Tsui L.-C."/>
        </authorList>
    </citation>
    <scope>NUCLEOTIDE SEQUENCE [LARGE SCALE GENOMIC DNA]</scope>
    <scope>VARIANT HIS-80 DEL</scope>
</reference>
<reference key="6">
    <citation type="journal article" date="2004" name="Genome Res.">
        <title>The status, quality, and expansion of the NIH full-length cDNA project: the Mammalian Gene Collection (MGC).</title>
        <authorList>
            <consortium name="The MGC Project Team"/>
        </authorList>
    </citation>
    <scope>NUCLEOTIDE SEQUENCE [LARGE SCALE MRNA]</scope>
    <scope>VARIANT HIS-80 DEL</scope>
    <source>
        <tissue>Skin</tissue>
    </source>
</reference>
<reference key="7">
    <citation type="journal article" date="2005" name="Mol. Cell. Biochem.">
        <title>Characterization of Mesenchyme Homeobox 2 (MEOX2) transcription factor binding to RING finger protein 10.</title>
        <authorList>
            <person name="Lin J."/>
            <person name="Friesen M.T."/>
            <person name="Bocangel P."/>
            <person name="Cheung D."/>
            <person name="Rawszer K."/>
            <person name="Wigle J.T."/>
        </authorList>
    </citation>
    <scope>INTERACTION WITH RNF10</scope>
</reference>
<reference key="8">
    <citation type="journal article" date="2007" name="J. Biol. Chem.">
        <title>The homeobox gene GAX activates p21WAF1/CIP1 expression in vascular endothelial cells through direct interaction with upstream AT-rich sequences.</title>
        <authorList>
            <person name="Chen Y."/>
            <person name="Leal A.D."/>
            <person name="Patel S."/>
            <person name="Gorski D.H."/>
        </authorList>
    </citation>
    <scope>FUNCTION</scope>
</reference>
<reference key="9">
    <citation type="journal article" date="2009" name="Genes Chromosomes Cancer">
        <title>Two candidate tumor suppressor genes, MEOX2 and SOSTDC1, identified in a 7p21 homozygous deletion region in a Wilms tumor.</title>
        <authorList>
            <person name="Ohshima J."/>
            <person name="Haruta M."/>
            <person name="Arai Y."/>
            <person name="Kasai F."/>
            <person name="Fujiwara Y."/>
            <person name="Ariga T."/>
            <person name="Okita H."/>
            <person name="Fukuzawa M."/>
            <person name="Hata J."/>
            <person name="Horie H."/>
            <person name="Kaneko Y."/>
        </authorList>
    </citation>
    <scope>POLY-HIS POLYMORPHISM</scope>
</reference>
<reference key="10">
    <citation type="journal article" date="2009" name="PLoS Genet.">
        <title>Genome-wide analysis of histidine repeats reveals their role in the localization of human proteins to the nuclear speckles compartment.</title>
        <authorList>
            <person name="Salichs E."/>
            <person name="Ledda A."/>
            <person name="Mularoni L."/>
            <person name="Alba M.M."/>
            <person name="de la Luna S."/>
        </authorList>
    </citation>
    <scope>SUBCELLULAR LOCATION</scope>
</reference>
<reference key="11">
    <citation type="journal article" date="2010" name="Mol. Cell. Biol.">
        <title>Regulation of the expression and activity of the antiangiogenic homeobox gene GAX/MEOX2 by ZEB2 and microRNA-221.</title>
        <authorList>
            <person name="Chen Y."/>
            <person name="Banda M."/>
            <person name="Speyer C.L."/>
            <person name="Smith J.S."/>
            <person name="Rabson A.B."/>
            <person name="Gorski D.H."/>
        </authorList>
    </citation>
    <scope>FUNCTION</scope>
    <scope>INDUCTION</scope>
</reference>
<reference key="12">
    <citation type="journal article" date="2011" name="PLoS ONE">
        <title>Mechanisms of MEOX1 and MEOX2 regulation of the cyclin dependent kinase inhibitors p21 and p16 in vascular endothelial cells.</title>
        <authorList>
            <person name="Douville J.M."/>
            <person name="Cheung D.Y."/>
            <person name="Herbert K.L."/>
            <person name="Moffatt T."/>
            <person name="Wigle J.T."/>
        </authorList>
    </citation>
    <scope>FUNCTION</scope>
    <scope>SUBCELLULAR LOCATION</scope>
    <scope>MUTAGENESIS OF GLN-236</scope>
</reference>
<feature type="chain" id="PRO_0000049197" description="Homeobox protein MOX-2">
    <location>
        <begin position="1"/>
        <end position="304"/>
    </location>
</feature>
<feature type="DNA-binding region" description="Homeobox" evidence="3">
    <location>
        <begin position="187"/>
        <end position="246"/>
    </location>
</feature>
<feature type="region of interest" description="Disordered" evidence="4">
    <location>
        <begin position="63"/>
        <end position="192"/>
    </location>
</feature>
<feature type="compositionally biased region" description="Basic residues" evidence="4">
    <location>
        <begin position="63"/>
        <end position="82"/>
    </location>
</feature>
<feature type="compositionally biased region" description="Polar residues" evidence="4">
    <location>
        <begin position="87"/>
        <end position="101"/>
    </location>
</feature>
<feature type="compositionally biased region" description="Low complexity" evidence="4">
    <location>
        <begin position="112"/>
        <end position="137"/>
    </location>
</feature>
<feature type="compositionally biased region" description="Basic and acidic residues" evidence="4">
    <location>
        <begin position="158"/>
        <end position="171"/>
    </location>
</feature>
<feature type="compositionally biased region" description="Basic and acidic residues" evidence="4">
    <location>
        <begin position="183"/>
        <end position="192"/>
    </location>
</feature>
<feature type="sequence variant" id="VAR_026040" evidence="15">
    <location>
        <begin position="79"/>
        <end position="80"/>
    </location>
</feature>
<feature type="sequence variant" id="VAR_026041" evidence="5 6 7 14">
    <location>
        <position position="80"/>
    </location>
</feature>
<feature type="sequence variant" id="VAR_049585" description="In dbSNP:rs2237493.">
    <original>I</original>
    <variation>L</variation>
    <location>
        <position position="287"/>
    </location>
</feature>
<feature type="mutagenesis site" description="Abolishes DNA-binding. Does not affect ability to activate expression of CDKN2A." evidence="13">
    <original>Q</original>
    <variation>E</variation>
    <location>
        <position position="236"/>
    </location>
</feature>
<feature type="sequence conflict" description="In Ref. 2; AAA58497." evidence="19" ref="2">
    <original>G</original>
    <variation>D</variation>
    <location>
        <position position="58"/>
    </location>
</feature>
<sequence>MEHPLFGCLRSPHATAQGLHPFSQSSLALHGRSDHMSYPELSTSSSSCIIAGYPNEEGMFASQHHRGHHHHHHHHHHHHHQQQQHQALQTNWHLPQMSSPPSAARHSLCLQPDSGGPPELGSSPPVLCSNSSSLGSSTPTGAACAPGDYGRQALSPAEAEKRSGGKRKSDSSDSQEGNYKSEVNSKPRKERTAFTKEQIRELEAEFAHHNYLTRLRRYEIAVNLDLTERQVKVWFQNRRMKWKRVKGGQQGAAAREKELVNVKKGTLLPSELSGIGAATLQQTGDSIANEDSHDSDHSSEHAHL</sequence>
<accession>P50222</accession>
<accession>A4D127</accession>
<accession>B2R8I7</accession>
<accession>O75263</accession>
<accession>Q9UPL6</accession>
<dbReference type="EMBL" id="X82629">
    <property type="protein sequence ID" value="CAA57949.1"/>
    <property type="molecule type" value="mRNA"/>
</dbReference>
<dbReference type="EMBL" id="L36328">
    <property type="protein sequence ID" value="AAA58497.1"/>
    <property type="molecule type" value="mRNA"/>
</dbReference>
<dbReference type="EMBL" id="AK313386">
    <property type="protein sequence ID" value="BAG36184.1"/>
    <property type="molecule type" value="mRNA"/>
</dbReference>
<dbReference type="EMBL" id="AC005550">
    <property type="protein sequence ID" value="AAC33152.1"/>
    <property type="molecule type" value="Genomic_DNA"/>
</dbReference>
<dbReference type="EMBL" id="AC004452">
    <property type="protein sequence ID" value="AAC06184.1"/>
    <property type="molecule type" value="Genomic_DNA"/>
</dbReference>
<dbReference type="EMBL" id="CH236948">
    <property type="protein sequence ID" value="EAL24289.1"/>
    <property type="molecule type" value="Genomic_DNA"/>
</dbReference>
<dbReference type="EMBL" id="BC017021">
    <property type="protein sequence ID" value="AAH17021.1"/>
    <property type="molecule type" value="mRNA"/>
</dbReference>
<dbReference type="CCDS" id="CCDS34605.1"/>
<dbReference type="PIR" id="A55641">
    <property type="entry name" value="A55641"/>
</dbReference>
<dbReference type="PIR" id="A56837">
    <property type="entry name" value="A56837"/>
</dbReference>
<dbReference type="RefSeq" id="NP_005915.2">
    <property type="nucleotide sequence ID" value="NM_005924.5"/>
</dbReference>
<dbReference type="SMR" id="P50222"/>
<dbReference type="BioGRID" id="110386">
    <property type="interactions" value="749"/>
</dbReference>
<dbReference type="FunCoup" id="P50222">
    <property type="interactions" value="1306"/>
</dbReference>
<dbReference type="IntAct" id="P50222">
    <property type="interactions" value="211"/>
</dbReference>
<dbReference type="MINT" id="P50222"/>
<dbReference type="STRING" id="9606.ENSP00000262041"/>
<dbReference type="MoonDB" id="P50222">
    <property type="type" value="Predicted"/>
</dbReference>
<dbReference type="iPTMnet" id="P50222"/>
<dbReference type="PhosphoSitePlus" id="P50222"/>
<dbReference type="BioMuta" id="MEOX2"/>
<dbReference type="DMDM" id="93141286"/>
<dbReference type="jPOST" id="P50222"/>
<dbReference type="MassIVE" id="P50222"/>
<dbReference type="PaxDb" id="9606-ENSP00000262041"/>
<dbReference type="PeptideAtlas" id="P50222"/>
<dbReference type="ProteomicsDB" id="56206"/>
<dbReference type="Antibodypedia" id="11796">
    <property type="antibodies" value="406 antibodies from 35 providers"/>
</dbReference>
<dbReference type="DNASU" id="4223"/>
<dbReference type="Ensembl" id="ENST00000262041.6">
    <property type="protein sequence ID" value="ENSP00000262041.5"/>
    <property type="gene ID" value="ENSG00000106511.6"/>
</dbReference>
<dbReference type="GeneID" id="4223"/>
<dbReference type="KEGG" id="hsa:4223"/>
<dbReference type="MANE-Select" id="ENST00000262041.6">
    <property type="protein sequence ID" value="ENSP00000262041.5"/>
    <property type="RefSeq nucleotide sequence ID" value="NM_005924.5"/>
    <property type="RefSeq protein sequence ID" value="NP_005915.2"/>
</dbReference>
<dbReference type="UCSC" id="uc003stc.4">
    <property type="organism name" value="human"/>
</dbReference>
<dbReference type="AGR" id="HGNC:7014"/>
<dbReference type="CTD" id="4223"/>
<dbReference type="DisGeNET" id="4223"/>
<dbReference type="GeneCards" id="MEOX2"/>
<dbReference type="HGNC" id="HGNC:7014">
    <property type="gene designation" value="MEOX2"/>
</dbReference>
<dbReference type="HPA" id="ENSG00000106511">
    <property type="expression patterns" value="Tissue enhanced (adipose tissue, placenta)"/>
</dbReference>
<dbReference type="MIM" id="600535">
    <property type="type" value="gene"/>
</dbReference>
<dbReference type="neXtProt" id="NX_P50222"/>
<dbReference type="OpenTargets" id="ENSG00000106511"/>
<dbReference type="PharmGKB" id="PA30748"/>
<dbReference type="VEuPathDB" id="HostDB:ENSG00000106511"/>
<dbReference type="eggNOG" id="KOG0489">
    <property type="taxonomic scope" value="Eukaryota"/>
</dbReference>
<dbReference type="GeneTree" id="ENSGT00940000154018"/>
<dbReference type="HOGENOM" id="CLU_081326_0_0_1"/>
<dbReference type="InParanoid" id="P50222"/>
<dbReference type="OMA" id="QHHASWH"/>
<dbReference type="OrthoDB" id="6159439at2759"/>
<dbReference type="PAN-GO" id="P50222">
    <property type="GO annotations" value="5 GO annotations based on evolutionary models"/>
</dbReference>
<dbReference type="PhylomeDB" id="P50222"/>
<dbReference type="TreeFam" id="TF351603"/>
<dbReference type="PathwayCommons" id="P50222"/>
<dbReference type="SignaLink" id="P50222"/>
<dbReference type="SIGNOR" id="P50222"/>
<dbReference type="BioGRID-ORCS" id="4223">
    <property type="hits" value="8 hits in 1178 CRISPR screens"/>
</dbReference>
<dbReference type="CD-CODE" id="804901D1">
    <property type="entry name" value="Nuclear speckle"/>
</dbReference>
<dbReference type="ChiTaRS" id="MEOX2">
    <property type="organism name" value="human"/>
</dbReference>
<dbReference type="GeneWiki" id="MEOX2"/>
<dbReference type="GenomeRNAi" id="4223"/>
<dbReference type="Pharos" id="P50222">
    <property type="development level" value="Tbio"/>
</dbReference>
<dbReference type="PRO" id="PR:P50222"/>
<dbReference type="Proteomes" id="UP000005640">
    <property type="component" value="Chromosome 7"/>
</dbReference>
<dbReference type="RNAct" id="P50222">
    <property type="molecule type" value="protein"/>
</dbReference>
<dbReference type="Bgee" id="ENSG00000106511">
    <property type="expression patterns" value="Expressed in calcaneal tendon and 147 other cell types or tissues"/>
</dbReference>
<dbReference type="GO" id="GO:0000785">
    <property type="term" value="C:chromatin"/>
    <property type="evidence" value="ECO:0000247"/>
    <property type="project" value="NTNU_SB"/>
</dbReference>
<dbReference type="GO" id="GO:0005737">
    <property type="term" value="C:cytoplasm"/>
    <property type="evidence" value="ECO:0000314"/>
    <property type="project" value="UniProtKB"/>
</dbReference>
<dbReference type="GO" id="GO:0016607">
    <property type="term" value="C:nuclear speck"/>
    <property type="evidence" value="ECO:0007669"/>
    <property type="project" value="UniProtKB-SubCell"/>
</dbReference>
<dbReference type="GO" id="GO:0005634">
    <property type="term" value="C:nucleus"/>
    <property type="evidence" value="ECO:0000314"/>
    <property type="project" value="UniProtKB"/>
</dbReference>
<dbReference type="GO" id="GO:0001228">
    <property type="term" value="F:DNA-binding transcription activator activity, RNA polymerase II-specific"/>
    <property type="evidence" value="ECO:0000314"/>
    <property type="project" value="NTNU_SB"/>
</dbReference>
<dbReference type="GO" id="GO:0003700">
    <property type="term" value="F:DNA-binding transcription factor activity"/>
    <property type="evidence" value="ECO:0000314"/>
    <property type="project" value="UniProtKB"/>
</dbReference>
<dbReference type="GO" id="GO:0000981">
    <property type="term" value="F:DNA-binding transcription factor activity, RNA polymerase II-specific"/>
    <property type="evidence" value="ECO:0000247"/>
    <property type="project" value="NTNU_SB"/>
</dbReference>
<dbReference type="GO" id="GO:0000978">
    <property type="term" value="F:RNA polymerase II cis-regulatory region sequence-specific DNA binding"/>
    <property type="evidence" value="ECO:0000314"/>
    <property type="project" value="NTNU_SB"/>
</dbReference>
<dbReference type="GO" id="GO:0043565">
    <property type="term" value="F:sequence-specific DNA binding"/>
    <property type="evidence" value="ECO:0000314"/>
    <property type="project" value="MGI"/>
</dbReference>
<dbReference type="GO" id="GO:1990837">
    <property type="term" value="F:sequence-specific double-stranded DNA binding"/>
    <property type="evidence" value="ECO:0000314"/>
    <property type="project" value="ARUK-UCL"/>
</dbReference>
<dbReference type="GO" id="GO:0001525">
    <property type="term" value="P:angiogenesis"/>
    <property type="evidence" value="ECO:0007669"/>
    <property type="project" value="Ensembl"/>
</dbReference>
<dbReference type="GO" id="GO:0060173">
    <property type="term" value="P:limb development"/>
    <property type="evidence" value="ECO:0007669"/>
    <property type="project" value="Ensembl"/>
</dbReference>
<dbReference type="GO" id="GO:0090051">
    <property type="term" value="P:negative regulation of cell migration involved in sprouting angiogenesis"/>
    <property type="evidence" value="ECO:0000316"/>
    <property type="project" value="BHF-UCL"/>
</dbReference>
<dbReference type="GO" id="GO:0045944">
    <property type="term" value="P:positive regulation of transcription by RNA polymerase II"/>
    <property type="evidence" value="ECO:0000314"/>
    <property type="project" value="NTNU_SB"/>
</dbReference>
<dbReference type="GO" id="GO:0006357">
    <property type="term" value="P:regulation of transcription by RNA polymerase II"/>
    <property type="evidence" value="ECO:0000318"/>
    <property type="project" value="GO_Central"/>
</dbReference>
<dbReference type="GO" id="GO:0060021">
    <property type="term" value="P:roof of mouth development"/>
    <property type="evidence" value="ECO:0007669"/>
    <property type="project" value="Ensembl"/>
</dbReference>
<dbReference type="GO" id="GO:0007519">
    <property type="term" value="P:skeletal muscle tissue development"/>
    <property type="evidence" value="ECO:0007669"/>
    <property type="project" value="Ensembl"/>
</dbReference>
<dbReference type="GO" id="GO:0061053">
    <property type="term" value="P:somite development"/>
    <property type="evidence" value="ECO:0000318"/>
    <property type="project" value="GO_Central"/>
</dbReference>
<dbReference type="GO" id="GO:0001757">
    <property type="term" value="P:somite specification"/>
    <property type="evidence" value="ECO:0007669"/>
    <property type="project" value="Ensembl"/>
</dbReference>
<dbReference type="CDD" id="cd00086">
    <property type="entry name" value="homeodomain"/>
    <property type="match status" value="1"/>
</dbReference>
<dbReference type="FunFam" id="1.10.10.60:FF:000109">
    <property type="entry name" value="Homeobox protein MOX-2"/>
    <property type="match status" value="1"/>
</dbReference>
<dbReference type="Gene3D" id="1.10.10.60">
    <property type="entry name" value="Homeodomain-like"/>
    <property type="match status" value="1"/>
</dbReference>
<dbReference type="InterPro" id="IPR001356">
    <property type="entry name" value="HD"/>
</dbReference>
<dbReference type="InterPro" id="IPR020479">
    <property type="entry name" value="HD_metazoa"/>
</dbReference>
<dbReference type="InterPro" id="IPR017970">
    <property type="entry name" value="Homeobox_CS"/>
</dbReference>
<dbReference type="InterPro" id="IPR009057">
    <property type="entry name" value="Homeodomain-like_sf"/>
</dbReference>
<dbReference type="InterPro" id="IPR042634">
    <property type="entry name" value="MOX-1/MOX-2"/>
</dbReference>
<dbReference type="PANTHER" id="PTHR24328">
    <property type="entry name" value="HOMEOBOX PROTEIN MOX"/>
    <property type="match status" value="1"/>
</dbReference>
<dbReference type="PANTHER" id="PTHR24328:SF1">
    <property type="entry name" value="HOMEOBOX PROTEIN MOX-2"/>
    <property type="match status" value="1"/>
</dbReference>
<dbReference type="Pfam" id="PF00046">
    <property type="entry name" value="Homeodomain"/>
    <property type="match status" value="1"/>
</dbReference>
<dbReference type="PRINTS" id="PR00024">
    <property type="entry name" value="HOMEOBOX"/>
</dbReference>
<dbReference type="SMART" id="SM00389">
    <property type="entry name" value="HOX"/>
    <property type="match status" value="1"/>
</dbReference>
<dbReference type="SUPFAM" id="SSF46689">
    <property type="entry name" value="Homeodomain-like"/>
    <property type="match status" value="1"/>
</dbReference>
<dbReference type="PROSITE" id="PS00027">
    <property type="entry name" value="HOMEOBOX_1"/>
    <property type="match status" value="1"/>
</dbReference>
<dbReference type="PROSITE" id="PS50071">
    <property type="entry name" value="HOMEOBOX_2"/>
    <property type="match status" value="1"/>
</dbReference>
<evidence type="ECO:0000250" key="1">
    <source>
        <dbReference type="UniProtKB" id="P32443"/>
    </source>
</evidence>
<evidence type="ECO:0000250" key="2">
    <source>
        <dbReference type="UniProtKB" id="P39020"/>
    </source>
</evidence>
<evidence type="ECO:0000255" key="3">
    <source>
        <dbReference type="PROSITE-ProRule" id="PRU00108"/>
    </source>
</evidence>
<evidence type="ECO:0000256" key="4">
    <source>
        <dbReference type="SAM" id="MobiDB-lite"/>
    </source>
</evidence>
<evidence type="ECO:0000269" key="5">
    <source>
    </source>
</evidence>
<evidence type="ECO:0000269" key="6">
    <source>
    </source>
</evidence>
<evidence type="ECO:0000269" key="7">
    <source>
    </source>
</evidence>
<evidence type="ECO:0000269" key="8">
    <source>
    </source>
</evidence>
<evidence type="ECO:0000269" key="9">
    <source>
    </source>
</evidence>
<evidence type="ECO:0000269" key="10">
    <source>
    </source>
</evidence>
<evidence type="ECO:0000269" key="11">
    <source>
    </source>
</evidence>
<evidence type="ECO:0000269" key="12">
    <source>
    </source>
</evidence>
<evidence type="ECO:0000269" key="13">
    <source>
    </source>
</evidence>
<evidence type="ECO:0000269" key="14">
    <source>
    </source>
</evidence>
<evidence type="ECO:0000269" key="15">
    <source>
    </source>
</evidence>
<evidence type="ECO:0000303" key="16">
    <source>
    </source>
</evidence>
<evidence type="ECO:0000303" key="17">
    <source>
    </source>
</evidence>
<evidence type="ECO:0000303" key="18">
    <source>
    </source>
</evidence>
<evidence type="ECO:0000305" key="19"/>
<evidence type="ECO:0000312" key="20">
    <source>
        <dbReference type="HGNC" id="HGNC:7014"/>
    </source>
</evidence>
<protein>
    <recommendedName>
        <fullName evidence="17">Homeobox protein MOX-2</fullName>
    </recommendedName>
    <alternativeName>
        <fullName evidence="18">Growth arrest-specific homeobox</fullName>
    </alternativeName>
    <alternativeName>
        <fullName evidence="17">Mesenchyme homeobox 2</fullName>
    </alternativeName>
</protein>
<gene>
    <name evidence="16 20" type="primary">MEOX2</name>
    <name evidence="18" type="synonym">GAX</name>
    <name evidence="17" type="synonym">MOX2</name>
</gene>
<proteinExistence type="evidence at protein level"/>
<comment type="function">
    <text evidence="1 2 9 12 13">Mesodermal transcription factor that plays a key role in somitogenesis and somitogenesis and limb muscle differentiation (By similarity). Required during limb development for normal appendicular muscle formation and for the normal regulation of myogenic genes (By similarity). May have a regulatory role when quiescent vascular smooth muscle cells reenter the cell cycle (By similarity). Also acts as a negative regulator of angiogenesis (PubMed:17074759, PubMed:20516212, PubMed:22206000). Activates expression of CDKN1A and CDKN2A in endothelial cells, acting as a regulator of vascular cell proliferation (PubMed:17074759, PubMed:22206000). While it activates CDKN1A in a DNA-dependent manner, it activates CDKN2A in a DNA-independent manner (PubMed:22206000). Together with TCF15, regulates transcription in heart endothelial cells to regulate fatty acid transport across heart endothelial cells (By similarity).</text>
</comment>
<comment type="subunit">
    <text evidence="1 8">Interacts with RNF10 (PubMed:16335786). Interacts with TCF15 (By similarity).</text>
</comment>
<comment type="interaction">
    <interactant intactId="EBI-748397">
        <id>P50222</id>
    </interactant>
    <interactant intactId="EBI-351526">
        <id>O43707</id>
        <label>ACTN4</label>
    </interactant>
    <organismsDiffer>false</organismsDiffer>
    <experiments>3</experiments>
</comment>
<comment type="interaction">
    <interactant intactId="EBI-748397">
        <id>P50222</id>
    </interactant>
    <interactant intactId="EBI-9028051">
        <id>P58397</id>
        <label>ADAMTS12</label>
    </interactant>
    <organismsDiffer>false</organismsDiffer>
    <experiments>3</experiments>
</comment>
<comment type="interaction">
    <interactant intactId="EBI-748397">
        <id>P50222</id>
    </interactant>
    <interactant intactId="EBI-3893468">
        <id>Q99943</id>
        <label>AGPAT1</label>
    </interactant>
    <organismsDiffer>false</organismsDiffer>
    <experiments>3</experiments>
</comment>
<comment type="interaction">
    <interactant intactId="EBI-748397">
        <id>P50222</id>
    </interactant>
    <interactant intactId="EBI-2371423">
        <id>O43865</id>
        <label>AHCYL1</label>
    </interactant>
    <organismsDiffer>false</organismsDiffer>
    <experiments>3</experiments>
</comment>
<comment type="interaction">
    <interactant intactId="EBI-748397">
        <id>P50222</id>
    </interactant>
    <interactant intactId="EBI-9361704">
        <id>Q719I0</id>
        <label>AHSA2P</label>
    </interactant>
    <organismsDiffer>false</organismsDiffer>
    <experiments>3</experiments>
</comment>
<comment type="interaction">
    <interactant intactId="EBI-748397">
        <id>P50222</id>
    </interactant>
    <interactant intactId="EBI-8643161">
        <id>Q9NX04</id>
        <label>AIRIM</label>
    </interactant>
    <organismsDiffer>false</organismsDiffer>
    <experiments>3</experiments>
</comment>
<comment type="interaction">
    <interactant intactId="EBI-748397">
        <id>P50222</id>
    </interactant>
    <interactant intactId="EBI-762428">
        <id>Q92688</id>
        <label>ANP32B</label>
    </interactant>
    <organismsDiffer>false</organismsDiffer>
    <experiments>3</experiments>
</comment>
<comment type="interaction">
    <interactant intactId="EBI-748397">
        <id>P50222</id>
    </interactant>
    <interactant intactId="EBI-10252815">
        <id>Q6P4J0</id>
        <label>ARD1A</label>
    </interactant>
    <organismsDiffer>false</organismsDiffer>
    <experiments>3</experiments>
</comment>
<comment type="interaction">
    <interactant intactId="EBI-748397">
        <id>P50222</id>
    </interactant>
    <interactant intactId="EBI-717515">
        <id>Q14155</id>
        <label>ARHGEF7</label>
    </interactant>
    <organismsDiffer>false</organismsDiffer>
    <experiments>3</experiments>
</comment>
<comment type="interaction">
    <interactant intactId="EBI-748397">
        <id>P50222</id>
    </interactant>
    <interactant intactId="EBI-10175276">
        <id>A9UGY9</id>
        <label>ATG5</label>
    </interactant>
    <organismsDiffer>false</organismsDiffer>
    <experiments>3</experiments>
</comment>
<comment type="interaction">
    <interactant intactId="EBI-748397">
        <id>P50222</id>
    </interactant>
    <interactant intactId="EBI-10247136">
        <id>Q5TBC7</id>
        <label>BCL2L15</label>
    </interactant>
    <organismsDiffer>false</organismsDiffer>
    <experiments>3</experiments>
</comment>
<comment type="interaction">
    <interactant intactId="EBI-748397">
        <id>P50222</id>
    </interactant>
    <interactant intactId="EBI-624835">
        <id>Q06187</id>
        <label>BTK</label>
    </interactant>
    <organismsDiffer>false</organismsDiffer>
    <experiments>3</experiments>
</comment>
<comment type="interaction">
    <interactant intactId="EBI-748397">
        <id>P50222</id>
    </interactant>
    <interactant intactId="EBI-751319">
        <id>Q9H257</id>
        <label>CARD9</label>
    </interactant>
    <organismsDiffer>false</organismsDiffer>
    <experiments>3</experiments>
</comment>
<comment type="interaction">
    <interactant intactId="EBI-748397">
        <id>P50222</id>
    </interactant>
    <interactant intactId="EBI-2510738">
        <id>P31944</id>
        <label>CASP14</label>
    </interactant>
    <organismsDiffer>false</organismsDiffer>
    <experiments>3</experiments>
</comment>
<comment type="interaction">
    <interactant intactId="EBI-748397">
        <id>P50222</id>
    </interactant>
    <interactant intactId="EBI-10261970">
        <id>Q8IW40</id>
        <label>CCDC103</label>
    </interactant>
    <organismsDiffer>false</organismsDiffer>
    <experiments>3</experiments>
</comment>
<comment type="interaction">
    <interactant intactId="EBI-748397">
        <id>P50222</id>
    </interactant>
    <interactant intactId="EBI-395261">
        <id>P24863</id>
        <label>CCNC</label>
    </interactant>
    <organismsDiffer>false</organismsDiffer>
    <experiments>3</experiments>
</comment>
<comment type="interaction">
    <interactant intactId="EBI-748397">
        <id>P50222</id>
    </interactant>
    <interactant intactId="EBI-10181988">
        <id>Q8IYX8-2</id>
        <label>CEP57L1</label>
    </interactant>
    <organismsDiffer>false</organismsDiffer>
    <experiments>3</experiments>
</comment>
<comment type="interaction">
    <interactant intactId="EBI-748397">
        <id>P50222</id>
    </interactant>
    <interactant intactId="EBI-741528">
        <id>Q9UKJ5</id>
        <label>CHIC2</label>
    </interactant>
    <organismsDiffer>false</organismsDiffer>
    <experiments>3</experiments>
</comment>
<comment type="interaction">
    <interactant intactId="EBI-748397">
        <id>P50222</id>
    </interactant>
    <interactant intactId="EBI-947551">
        <id>Q9H2X0</id>
        <label>CHRD</label>
    </interactant>
    <organismsDiffer>false</organismsDiffer>
    <experiments>3</experiments>
</comment>
<comment type="interaction">
    <interactant intactId="EBI-748397">
        <id>P50222</id>
    </interactant>
    <interactant intactId="EBI-11979451">
        <id>P07510-2</id>
        <label>CHRNG</label>
    </interactant>
    <organismsDiffer>false</organismsDiffer>
    <experiments>3</experiments>
</comment>
<comment type="interaction">
    <interactant intactId="EBI-748397">
        <id>P50222</id>
    </interactant>
    <interactant intactId="EBI-750511">
        <id>Q6FI81</id>
        <label>CIAPIN1</label>
    </interactant>
    <organismsDiffer>false</organismsDiffer>
    <experiments>3</experiments>
</comment>
<comment type="interaction">
    <interactant intactId="EBI-748397">
        <id>P50222</id>
    </interactant>
    <interactant intactId="EBI-10292696">
        <id>Q96Q77</id>
        <label>CIB3</label>
    </interactant>
    <organismsDiffer>false</organismsDiffer>
    <experiments>3</experiments>
</comment>
<comment type="interaction">
    <interactant intactId="EBI-748397">
        <id>P50222</id>
    </interactant>
    <interactant intactId="EBI-310892">
        <id>Q9UHC6</id>
        <label>CNTNAP2</label>
    </interactant>
    <organismsDiffer>false</organismsDiffer>
    <experiments>3</experiments>
</comment>
<comment type="interaction">
    <interactant intactId="EBI-748397">
        <id>P50222</id>
    </interactant>
    <interactant intactId="EBI-719005">
        <id>O95741</id>
        <label>CPNE6</label>
    </interactant>
    <organismsDiffer>false</organismsDiffer>
    <experiments>3</experiments>
</comment>
<comment type="interaction">
    <interactant intactId="EBI-748397">
        <id>P50222</id>
    </interactant>
    <interactant intactId="EBI-725860">
        <id>O95639</id>
        <label>CPSF4</label>
    </interactant>
    <organismsDiffer>false</organismsDiffer>
    <experiments>3</experiments>
</comment>
<comment type="interaction">
    <interactant intactId="EBI-748397">
        <id>P50222</id>
    </interactant>
    <interactant intactId="EBI-713677">
        <id>Q9UGL9</id>
        <label>CRCT1</label>
    </interactant>
    <organismsDiffer>false</organismsDiffer>
    <experiments>4</experiments>
</comment>
<comment type="interaction">
    <interactant intactId="EBI-748397">
        <id>P50222</id>
    </interactant>
    <interactant intactId="EBI-1763657">
        <id>Q9Y534</id>
        <label>CSDC2</label>
    </interactant>
    <organismsDiffer>false</organismsDiffer>
    <experiments>3</experiments>
</comment>
<comment type="interaction">
    <interactant intactId="EBI-748397">
        <id>P50222</id>
    </interactant>
    <interactant intactId="EBI-1809826">
        <id>P04141</id>
        <label>CSF2</label>
    </interactant>
    <organismsDiffer>false</organismsDiffer>
    <experiments>6</experiments>
</comment>
<comment type="interaction">
    <interactant intactId="EBI-748397">
        <id>P50222</id>
    </interactant>
    <interactant intactId="EBI-748128">
        <id>Q8WYA6</id>
        <label>CTNNBL1</label>
    </interactant>
    <organismsDiffer>false</organismsDiffer>
    <experiments>3</experiments>
</comment>
<comment type="interaction">
    <interactant intactId="EBI-748397">
        <id>P50222</id>
    </interactant>
    <interactant intactId="EBI-949911">
        <id>Q9P0U4</id>
        <label>CXXC1</label>
    </interactant>
    <organismsDiffer>false</organismsDiffer>
    <experiments>3</experiments>
</comment>
<comment type="interaction">
    <interactant intactId="EBI-748397">
        <id>P50222</id>
    </interactant>
    <interactant intactId="EBI-528411">
        <id>Q8WYQ5</id>
        <label>DGCR8</label>
    </interactant>
    <organismsDiffer>false</organismsDiffer>
    <experiments>3</experiments>
</comment>
<comment type="interaction">
    <interactant intactId="EBI-748397">
        <id>P50222</id>
    </interactant>
    <interactant intactId="EBI-2548605">
        <id>Q8NF50</id>
        <label>DOCK8</label>
    </interactant>
    <organismsDiffer>false</organismsDiffer>
    <experiments>3</experiments>
</comment>
<comment type="interaction">
    <interactant intactId="EBI-748397">
        <id>P50222</id>
    </interactant>
    <interactant intactId="EBI-742371">
        <id>Q96FJ2</id>
        <label>DYNLL2</label>
    </interactant>
    <organismsDiffer>false</organismsDiffer>
    <experiments>3</experiments>
</comment>
<comment type="interaction">
    <interactant intactId="EBI-748397">
        <id>P50222</id>
    </interactant>
    <interactant intactId="EBI-10267606">
        <id>Q8N7M0</id>
        <label>DYNLT5</label>
    </interactant>
    <organismsDiffer>false</organismsDiffer>
    <experiments>3</experiments>
</comment>
<comment type="interaction">
    <interactant intactId="EBI-748397">
        <id>P50222</id>
    </interactant>
    <interactant intactId="EBI-781301">
        <id>O60869</id>
        <label>EDF1</label>
    </interactant>
    <organismsDiffer>false</organismsDiffer>
    <experiments>3</experiments>
</comment>
<comment type="interaction">
    <interactant intactId="EBI-748397">
        <id>P50222</id>
    </interactant>
    <interactant intactId="EBI-536772">
        <id>Q12805</id>
        <label>EFEMP1</label>
    </interactant>
    <organismsDiffer>false</organismsDiffer>
    <experiments>3</experiments>
</comment>
<comment type="interaction">
    <interactant intactId="EBI-748397">
        <id>P50222</id>
    </interactant>
    <interactant intactId="EBI-743414">
        <id>O95967</id>
        <label>EFEMP2</label>
    </interactant>
    <organismsDiffer>false</organismsDiffer>
    <experiments>3</experiments>
</comment>
<comment type="interaction">
    <interactant intactId="EBI-748397">
        <id>P50222</id>
    </interactant>
    <interactant intactId="EBI-722730">
        <id>P52797</id>
        <label>EFNA3</label>
    </interactant>
    <organismsDiffer>false</organismsDiffer>
    <experiments>3</experiments>
</comment>
<comment type="interaction">
    <interactant intactId="EBI-748397">
        <id>P50222</id>
    </interactant>
    <interactant intactId="EBI-750700">
        <id>Q8N9N8</id>
        <label>EIF1AD</label>
    </interactant>
    <organismsDiffer>false</organismsDiffer>
    <experiments>3</experiments>
</comment>
<comment type="interaction">
    <interactant intactId="EBI-748397">
        <id>P50222</id>
    </interactant>
    <interactant intactId="EBI-373150">
        <id>P63241</id>
        <label>EIF5A</label>
    </interactant>
    <organismsDiffer>false</organismsDiffer>
    <experiments>3</experiments>
</comment>
<comment type="interaction">
    <interactant intactId="EBI-748397">
        <id>P50222</id>
    </interactant>
    <interactant intactId="EBI-489887">
        <id>P50402</id>
        <label>EMD</label>
    </interactant>
    <organismsDiffer>false</organismsDiffer>
    <experiments>3</experiments>
</comment>
<comment type="interaction">
    <interactant intactId="EBI-748397">
        <id>P50222</id>
    </interactant>
    <interactant intactId="EBI-6255981">
        <id>Q7L775</id>
        <label>EPM2AIP1</label>
    </interactant>
    <organismsDiffer>false</organismsDiffer>
    <experiments>3</experiments>
</comment>
<comment type="interaction">
    <interactant intactId="EBI-748397">
        <id>P50222</id>
    </interactant>
    <interactant intactId="EBI-2834260">
        <id>P62508</id>
        <label>ESRRG</label>
    </interactant>
    <organismsDiffer>false</organismsDiffer>
    <experiments>3</experiments>
</comment>
<comment type="interaction">
    <interactant intactId="EBI-748397">
        <id>P50222</id>
    </interactant>
    <interactant intactId="EBI-751248">
        <id>Q8NE31</id>
        <label>FAM13C</label>
    </interactant>
    <organismsDiffer>false</organismsDiffer>
    <experiments>3</experiments>
</comment>
<comment type="interaction">
    <interactant intactId="EBI-748397">
        <id>P50222</id>
    </interactant>
    <interactant intactId="EBI-10298603">
        <id>Q9BU27</id>
        <label>FAM3A</label>
    </interactant>
    <organismsDiffer>false</organismsDiffer>
    <experiments>3</experiments>
</comment>
<comment type="interaction">
    <interactant intactId="EBI-748397">
        <id>P50222</id>
    </interactant>
    <interactant intactId="EBI-10244131">
        <id>Q8TES7-6</id>
        <label>FBF1</label>
    </interactant>
    <organismsDiffer>false</organismsDiffer>
    <experiments>3</experiments>
</comment>
<comment type="interaction">
    <interactant intactId="EBI-748397">
        <id>P50222</id>
    </interactant>
    <interactant intactId="EBI-947897">
        <id>Q9UBX5</id>
        <label>FBLN5</label>
    </interactant>
    <organismsDiffer>false</organismsDiffer>
    <experiments>3</experiments>
</comment>
<comment type="interaction">
    <interactant intactId="EBI-748397">
        <id>P50222</id>
    </interactant>
    <interactant intactId="EBI-744771">
        <id>O75344</id>
        <label>FKBP6</label>
    </interactant>
    <organismsDiffer>false</organismsDiffer>
    <experiments>3</experiments>
</comment>
<comment type="interaction">
    <interactant intactId="EBI-748397">
        <id>P50222</id>
    </interactant>
    <interactant intactId="EBI-10253815">
        <id>Q6PIV2</id>
        <label>FOXR1</label>
    </interactant>
    <organismsDiffer>false</organismsDiffer>
    <experiments>3</experiments>
</comment>
<comment type="interaction">
    <interactant intactId="EBI-748397">
        <id>P50222</id>
    </interactant>
    <interactant intactId="EBI-9050116">
        <id>Q9BTY2</id>
        <label>FUCA2</label>
    </interactant>
    <organismsDiffer>false</organismsDiffer>
    <experiments>4</experiments>
</comment>
<comment type="interaction">
    <interactant intactId="EBI-748397">
        <id>P50222</id>
    </interactant>
    <interactant intactId="EBI-2907712">
        <id>Q495W5</id>
        <label>FUT11</label>
    </interactant>
    <organismsDiffer>false</organismsDiffer>
    <experiments>3</experiments>
</comment>
<comment type="interaction">
    <interactant intactId="EBI-748397">
        <id>P50222</id>
    </interactant>
    <interactant intactId="EBI-22578224">
        <id>A0A158RFV5</id>
        <label>GAGE1</label>
    </interactant>
    <organismsDiffer>false</organismsDiffer>
    <experiments>3</experiments>
</comment>
<comment type="interaction">
    <interactant intactId="EBI-748397">
        <id>P50222</id>
    </interactant>
    <interactant intactId="EBI-745707">
        <id>Q8NEA9</id>
        <label>GMCL2</label>
    </interactant>
    <organismsDiffer>false</organismsDiffer>
    <experiments>3</experiments>
</comment>
<comment type="interaction">
    <interactant intactId="EBI-748397">
        <id>P50222</id>
    </interactant>
    <interactant intactId="EBI-2806548">
        <id>Q9P2T1</id>
        <label>GMPR2</label>
    </interactant>
    <organismsDiffer>false</organismsDiffer>
    <experiments>3</experiments>
</comment>
<comment type="interaction">
    <interactant intactId="EBI-748397">
        <id>P50222</id>
    </interactant>
    <interactant intactId="EBI-10243023">
        <id>Q53Y01</id>
        <label>GNG11</label>
    </interactant>
    <organismsDiffer>false</organismsDiffer>
    <experiments>3</experiments>
</comment>
<comment type="interaction">
    <interactant intactId="EBI-748397">
        <id>P50222</id>
    </interactant>
    <interactant intactId="EBI-10181276">
        <id>Q0D2H9</id>
        <label>GOLGA8DP</label>
    </interactant>
    <organismsDiffer>false</organismsDiffer>
    <experiments>3</experiments>
</comment>
<comment type="interaction">
    <interactant intactId="EBI-748397">
        <id>P50222</id>
    </interactant>
    <interactant intactId="EBI-10181260">
        <id>Q08AF8</id>
        <label>GOLGA8G</label>
    </interactant>
    <organismsDiffer>false</organismsDiffer>
    <experiments>3</experiments>
</comment>
<comment type="interaction">
    <interactant intactId="EBI-748397">
        <id>P50222</id>
    </interactant>
    <interactant intactId="EBI-5666657">
        <id>Q9NWQ4</id>
        <label>GPATCH2L</label>
    </interactant>
    <organismsDiffer>false</organismsDiffer>
    <experiments>3</experiments>
</comment>
<comment type="interaction">
    <interactant intactId="EBI-748397">
        <id>P50222</id>
    </interactant>
    <interactant intactId="EBI-347538">
        <id>Q9Y4H4</id>
        <label>GPSM3</label>
    </interactant>
    <organismsDiffer>false</organismsDiffer>
    <experiments>3</experiments>
</comment>
<comment type="interaction">
    <interactant intactId="EBI-748397">
        <id>P50222</id>
    </interactant>
    <interactant intactId="EBI-2339359">
        <id>O14929</id>
        <label>HAT1</label>
    </interactant>
    <organismsDiffer>false</organismsDiffer>
    <experiments>3</experiments>
</comment>
<comment type="interaction">
    <interactant intactId="EBI-748397">
        <id>P50222</id>
    </interactant>
    <interactant intactId="EBI-10181798">
        <id>O14929-2</id>
        <label>HAT1</label>
    </interactant>
    <organismsDiffer>false</organismsDiffer>
    <experiments>3</experiments>
</comment>
<comment type="interaction">
    <interactant intactId="EBI-748397">
        <id>P50222</id>
    </interactant>
    <interactant intactId="EBI-10304657">
        <id>Q9H0R4</id>
        <label>HDHD2</label>
    </interactant>
    <organismsDiffer>false</organismsDiffer>
    <experiments>3</experiments>
</comment>
<comment type="interaction">
    <interactant intactId="EBI-748397">
        <id>P50222</id>
    </interactant>
    <interactant intactId="EBI-5460660">
        <id>Q96MH2</id>
        <label>HEXIM2</label>
    </interactant>
    <organismsDiffer>false</organismsDiffer>
    <experiments>3</experiments>
</comment>
<comment type="interaction">
    <interactant intactId="EBI-748397">
        <id>P50222</id>
    </interactant>
    <interactant intactId="EBI-1039104">
        <id>P14210</id>
        <label>HGF</label>
    </interactant>
    <organismsDiffer>false</organismsDiffer>
    <experiments>3</experiments>
</comment>
<comment type="interaction">
    <interactant intactId="EBI-748397">
        <id>P50222</id>
    </interactant>
    <interactant intactId="EBI-2880687">
        <id>Q5SSJ5</id>
        <label>HP1BP3</label>
    </interactant>
    <organismsDiffer>false</organismsDiffer>
    <experiments>3</experiments>
</comment>
<comment type="interaction">
    <interactant intactId="EBI-748397">
        <id>P50222</id>
    </interactant>
    <interactant intactId="EBI-1043151">
        <id>P28566</id>
        <label>HTR1E</label>
    </interactant>
    <organismsDiffer>false</organismsDiffer>
    <experiments>3</experiments>
</comment>
<comment type="interaction">
    <interactant intactId="EBI-748397">
        <id>P50222</id>
    </interactant>
    <interactant intactId="EBI-10259767">
        <id>Q86VF2</id>
        <label>IGFN1</label>
    </interactant>
    <organismsDiffer>false</organismsDiffer>
    <experiments>3</experiments>
</comment>
<comment type="interaction">
    <interactant intactId="EBI-748397">
        <id>P50222</id>
    </interactant>
    <interactant intactId="EBI-1749782">
        <id>P01583</id>
        <label>IL1A</label>
    </interactant>
    <organismsDiffer>false</organismsDiffer>
    <experiments>3</experiments>
</comment>
<comment type="interaction">
    <interactant intactId="EBI-748397">
        <id>P50222</id>
    </interactant>
    <interactant intactId="EBI-747509">
        <id>Q9UHH9</id>
        <label>IP6K2</label>
    </interactant>
    <organismsDiffer>false</organismsDiffer>
    <experiments>3</experiments>
</comment>
<comment type="interaction">
    <interactant intactId="EBI-748397">
        <id>P50222</id>
    </interactant>
    <interactant intactId="EBI-2431769">
        <id>O43736</id>
        <label>ITM2A</label>
    </interactant>
    <organismsDiffer>false</organismsDiffer>
    <experiments>3</experiments>
</comment>
<comment type="interaction">
    <interactant intactId="EBI-748397">
        <id>P50222</id>
    </interactant>
    <interactant intactId="EBI-399080">
        <id>Q92993</id>
        <label>KAT5</label>
    </interactant>
    <organismsDiffer>false</organismsDiffer>
    <experiments>3</experiments>
</comment>
<comment type="interaction">
    <interactant intactId="EBI-748397">
        <id>P50222</id>
    </interactant>
    <interactant intactId="EBI-2554344">
        <id>Q2M2Z5</id>
        <label>KIZ</label>
    </interactant>
    <organismsDiffer>false</organismsDiffer>
    <experiments>3</experiments>
</comment>
<comment type="interaction">
    <interactant intactId="EBI-748397">
        <id>P50222</id>
    </interactant>
    <interactant intactId="EBI-949319">
        <id>Q9NSK0</id>
        <label>KLC4</label>
    </interactant>
    <organismsDiffer>false</organismsDiffer>
    <experiments>3</experiments>
</comment>
<comment type="interaction">
    <interactant intactId="EBI-748397">
        <id>P50222</id>
    </interactant>
    <interactant intactId="EBI-6426443">
        <id>Q2WGJ6</id>
        <label>KLHL38</label>
    </interactant>
    <organismsDiffer>false</organismsDiffer>
    <experiments>3</experiments>
</comment>
<comment type="interaction">
    <interactant intactId="EBI-748397">
        <id>P50222</id>
    </interactant>
    <interactant intactId="EBI-3046635">
        <id>Q6KB66</id>
        <label>KRT80</label>
    </interactant>
    <organismsDiffer>false</organismsDiffer>
    <experiments>3</experiments>
</comment>
<comment type="interaction">
    <interactant intactId="EBI-748397">
        <id>P50222</id>
    </interactant>
    <interactant intactId="EBI-9996498">
        <id>O43790</id>
        <label>KRT86</label>
    </interactant>
    <organismsDiffer>false</organismsDiffer>
    <experiments>3</experiments>
</comment>
<comment type="interaction">
    <interactant intactId="EBI-748397">
        <id>P50222</id>
    </interactant>
    <interactant intactId="EBI-10217483">
        <id>P60412</id>
        <label>KRTAP10-11</label>
    </interactant>
    <organismsDiffer>false</organismsDiffer>
    <experiments>3</experiments>
</comment>
<comment type="interaction">
    <interactant intactId="EBI-748397">
        <id>P50222</id>
    </interactant>
    <interactant intactId="EBI-10172150">
        <id>P60370</id>
        <label>KRTAP10-5</label>
    </interactant>
    <organismsDiffer>false</organismsDiffer>
    <experiments>3</experiments>
</comment>
<comment type="interaction">
    <interactant intactId="EBI-748397">
        <id>P50222</id>
    </interactant>
    <interactant intactId="EBI-10171774">
        <id>P60410</id>
        <label>KRTAP10-8</label>
    </interactant>
    <organismsDiffer>false</organismsDiffer>
    <experiments>3</experiments>
</comment>
<comment type="interaction">
    <interactant intactId="EBI-748397">
        <id>P50222</id>
    </interactant>
    <interactant intactId="EBI-10172052">
        <id>P60411</id>
        <label>KRTAP10-9</label>
    </interactant>
    <organismsDiffer>false</organismsDiffer>
    <experiments>4</experiments>
</comment>
<comment type="interaction">
    <interactant intactId="EBI-748397">
        <id>P50222</id>
    </interactant>
    <interactant intactId="EBI-10210845">
        <id>P59990</id>
        <label>KRTAP12-1</label>
    </interactant>
    <organismsDiffer>false</organismsDiffer>
    <experiments>4</experiments>
</comment>
<comment type="interaction">
    <interactant intactId="EBI-748397">
        <id>P50222</id>
    </interactant>
    <interactant intactId="EBI-10176396">
        <id>P60329</id>
        <label>KRTAP12-4</label>
    </interactant>
    <organismsDiffer>false</organismsDiffer>
    <experiments>3</experiments>
</comment>
<comment type="interaction">
    <interactant intactId="EBI-748397">
        <id>P50222</id>
    </interactant>
    <interactant intactId="EBI-10302392">
        <id>Q9BYQ6</id>
        <label>KRTAP4-11</label>
    </interactant>
    <organismsDiffer>false</organismsDiffer>
    <experiments>3</experiments>
</comment>
<comment type="interaction">
    <interactant intactId="EBI-748397">
        <id>P50222</id>
    </interactant>
    <interactant intactId="EBI-10172511">
        <id>Q9BYR5</id>
        <label>KRTAP4-2</label>
    </interactant>
    <organismsDiffer>false</organismsDiffer>
    <experiments>3</experiments>
</comment>
<comment type="interaction">
    <interactant intactId="EBI-748397">
        <id>P50222</id>
    </interactant>
    <interactant intactId="EBI-10302547">
        <id>Q9BYR0</id>
        <label>KRTAP4-7</label>
    </interactant>
    <organismsDiffer>false</organismsDiffer>
    <experiments>3</experiments>
</comment>
<comment type="interaction">
    <interactant intactId="EBI-748397">
        <id>P50222</id>
    </interactant>
    <interactant intactId="EBI-10250562">
        <id>Q6L8G9</id>
        <label>KRTAP5-6</label>
    </interactant>
    <organismsDiffer>false</organismsDiffer>
    <experiments>3</experiments>
</comment>
<comment type="interaction">
    <interactant intactId="EBI-748397">
        <id>P50222</id>
    </interactant>
    <interactant intactId="EBI-3958099">
        <id>P26371</id>
        <label>KRTAP5-9</label>
    </interactant>
    <organismsDiffer>false</organismsDiffer>
    <experiments>3</experiments>
</comment>
<comment type="interaction">
    <interactant intactId="EBI-748397">
        <id>P50222</id>
    </interactant>
    <interactant intactId="EBI-1044640">
        <id>Q9BYQ4</id>
        <label>KRTAP9-2</label>
    </interactant>
    <organismsDiffer>false</organismsDiffer>
    <experiments>3</experiments>
</comment>
<comment type="interaction">
    <interactant intactId="EBI-748397">
        <id>P50222</id>
    </interactant>
    <interactant intactId="EBI-359761">
        <id>Q86UP2</id>
        <label>KTN1</label>
    </interactant>
    <organismsDiffer>false</organismsDiffer>
    <experiments>3</experiments>
</comment>
<comment type="interaction">
    <interactant intactId="EBI-748397">
        <id>P50222</id>
    </interactant>
    <interactant intactId="EBI-713382">
        <id>O43504</id>
        <label>LAMTOR5</label>
    </interactant>
    <organismsDiffer>false</organismsDiffer>
    <experiments>3</experiments>
</comment>
<comment type="interaction">
    <interactant intactId="EBI-748397">
        <id>P50222</id>
    </interactant>
    <interactant intactId="EBI-10245913">
        <id>Q5T7P3</id>
        <label>LCE1B</label>
    </interactant>
    <organismsDiffer>false</organismsDiffer>
    <experiments>3</experiments>
</comment>
<comment type="interaction">
    <interactant intactId="EBI-748397">
        <id>P50222</id>
    </interactant>
    <interactant intactId="EBI-10246607">
        <id>Q5TA79</id>
        <label>LCE2A</label>
    </interactant>
    <organismsDiffer>false</organismsDiffer>
    <experiments>3</experiments>
</comment>
<comment type="interaction">
    <interactant intactId="EBI-748397">
        <id>P50222</id>
    </interactant>
    <interactant intactId="EBI-10246358">
        <id>Q5TA78</id>
        <label>LCE4A</label>
    </interactant>
    <organismsDiffer>false</organismsDiffer>
    <experiments>3</experiments>
</comment>
<comment type="interaction">
    <interactant intactId="EBI-748397">
        <id>P50222</id>
    </interactant>
    <interactant intactId="EBI-347416">
        <id>Q9Y333</id>
        <label>LSM2</label>
    </interactant>
    <organismsDiffer>false</organismsDiffer>
    <experiments>3</experiments>
</comment>
<comment type="interaction">
    <interactant intactId="EBI-748397">
        <id>P50222</id>
    </interactant>
    <interactant intactId="EBI-716006">
        <id>Q9Y5V3</id>
        <label>MAGED1</label>
    </interactant>
    <organismsDiffer>false</organismsDiffer>
    <experiments>3</experiments>
</comment>
<comment type="interaction">
    <interactant intactId="EBI-748397">
        <id>P50222</id>
    </interactant>
    <interactant intactId="EBI-947402">
        <id>O60336</id>
        <label>MAPKBP1</label>
    </interactant>
    <organismsDiffer>false</organismsDiffer>
    <experiments>3</experiments>
</comment>
<comment type="interaction">
    <interactant intactId="EBI-748397">
        <id>P50222</id>
    </interactant>
    <interactant intactId="EBI-10195599">
        <id>Q6NSB6</id>
        <label>MKRN3</label>
    </interactant>
    <organismsDiffer>false</organismsDiffer>
    <experiments>3</experiments>
</comment>
<comment type="interaction">
    <interactant intactId="EBI-748397">
        <id>P50222</id>
    </interactant>
    <interactant intactId="EBI-5773143">
        <id>Q6P2C6</id>
        <label>MLLT6</label>
    </interactant>
    <organismsDiffer>false</organismsDiffer>
    <experiments>3</experiments>
</comment>
<comment type="interaction">
    <interactant intactId="EBI-748397">
        <id>P50222</id>
    </interactant>
    <interactant intactId="EBI-6957351">
        <id>P08254</id>
        <label>MMP3</label>
    </interactant>
    <organismsDiffer>false</organismsDiffer>
    <experiments>3</experiments>
</comment>
<comment type="interaction">
    <interactant intactId="EBI-748397">
        <id>P50222</id>
    </interactant>
    <interactant intactId="EBI-9675802">
        <id>Q6PF18</id>
        <label>MORN3</label>
    </interactant>
    <organismsDiffer>false</organismsDiffer>
    <experiments>3</experiments>
</comment>
<comment type="interaction">
    <interactant intactId="EBI-748397">
        <id>P50222</id>
    </interactant>
    <interactant intactId="EBI-748896">
        <id>Q96HT8</id>
        <label>MRFAP1L1</label>
    </interactant>
    <organismsDiffer>false</organismsDiffer>
    <experiments>3</experiments>
</comment>
<comment type="interaction">
    <interactant intactId="EBI-748397">
        <id>P50222</id>
    </interactant>
    <interactant intactId="EBI-2462339">
        <id>Q96DH6</id>
        <label>MSI2</label>
    </interactant>
    <organismsDiffer>false</organismsDiffer>
    <experiments>3</experiments>
</comment>
<comment type="interaction">
    <interactant intactId="EBI-748397">
        <id>P50222</id>
    </interactant>
    <interactant intactId="EBI-10172129">
        <id>A1L3X4</id>
        <label>MT1DP</label>
    </interactant>
    <organismsDiffer>false</organismsDiffer>
    <experiments>3</experiments>
</comment>
<comment type="interaction">
    <interactant intactId="EBI-748397">
        <id>P50222</id>
    </interactant>
    <interactant intactId="EBI-10307610">
        <id>Q9H6H2</id>
        <label>MUM1</label>
    </interactant>
    <organismsDiffer>false</organismsDiffer>
    <experiments>3</experiments>
</comment>
<comment type="interaction">
    <interactant intactId="EBI-748397">
        <id>P50222</id>
    </interactant>
    <interactant intactId="EBI-747693">
        <id>P41227</id>
        <label>NAA10</label>
    </interactant>
    <organismsDiffer>false</organismsDiffer>
    <experiments>3</experiments>
</comment>
<comment type="interaction">
    <interactant intactId="EBI-748397">
        <id>P50222</id>
    </interactant>
    <interactant intactId="EBI-7085333">
        <id>Q8IZF0</id>
        <label>NALCN</label>
    </interactant>
    <organismsDiffer>false</organismsDiffer>
    <experiments>3</experiments>
</comment>
<comment type="interaction">
    <interactant intactId="EBI-748397">
        <id>P50222</id>
    </interactant>
    <interactant intactId="EBI-749635">
        <id>P61601</id>
        <label>NCALD</label>
    </interactant>
    <organismsDiffer>false</organismsDiffer>
    <experiments>3</experiments>
</comment>
<comment type="interaction">
    <interactant intactId="EBI-748397">
        <id>P50222</id>
    </interactant>
    <interactant intactId="EBI-713635">
        <id>O43639</id>
        <label>NCK2</label>
    </interactant>
    <organismsDiffer>false</organismsDiffer>
    <experiments>3</experiments>
</comment>
<comment type="interaction">
    <interactant intactId="EBI-748397">
        <id>P50222</id>
    </interactant>
    <interactant intactId="EBI-1025994">
        <id>P20783</id>
        <label>NTF3</label>
    </interactant>
    <organismsDiffer>false</organismsDiffer>
    <experiments>3</experiments>
</comment>
<comment type="interaction">
    <interactant intactId="EBI-748397">
        <id>P50222</id>
    </interactant>
    <interactant intactId="EBI-1046387">
        <id>Q96NG3</id>
        <label>ODAD4</label>
    </interactant>
    <organismsDiffer>false</organismsDiffer>
    <experiments>3</experiments>
</comment>
<comment type="interaction">
    <interactant intactId="EBI-748397">
        <id>P50222</id>
    </interactant>
    <interactant intactId="EBI-10277776">
        <id>Q8WWZ8</id>
        <label>OIT3</label>
    </interactant>
    <organismsDiffer>false</organismsDiffer>
    <experiments>3</experiments>
</comment>
<comment type="interaction">
    <interactant intactId="EBI-748397">
        <id>P50222</id>
    </interactant>
    <interactant intactId="EBI-9057006">
        <id>Q9UJX0</id>
        <label>OSGIN1</label>
    </interactant>
    <organismsDiffer>false</organismsDiffer>
    <experiments>3</experiments>
</comment>
<comment type="interaction">
    <interactant intactId="EBI-748397">
        <id>P50222</id>
    </interactant>
    <interactant intactId="EBI-10181968">
        <id>Q7Z4N8</id>
        <label>P4HA3</label>
    </interactant>
    <organismsDiffer>false</organismsDiffer>
    <experiments>3</experiments>
</comment>
<comment type="interaction">
    <interactant intactId="EBI-748397">
        <id>P50222</id>
    </interactant>
    <interactant intactId="EBI-742503">
        <id>Q9UNF0</id>
        <label>PACSIN2</label>
    </interactant>
    <organismsDiffer>false</organismsDiffer>
    <experiments>3</experiments>
</comment>
<comment type="interaction">
    <interactant intactId="EBI-748397">
        <id>P50222</id>
    </interactant>
    <interactant intactId="EBI-10256818">
        <id>Q7Z2X7</id>
        <label>PAGE2</label>
    </interactant>
    <organismsDiffer>false</organismsDiffer>
    <experiments>3</experiments>
</comment>
<comment type="interaction">
    <interactant intactId="EBI-748397">
        <id>P50222</id>
    </interactant>
    <interactant intactId="EBI-3921217">
        <id>Q9HBI0</id>
        <label>PARVG</label>
    </interactant>
    <organismsDiffer>false</organismsDiffer>
    <experiments>3</experiments>
</comment>
<comment type="interaction">
    <interactant intactId="EBI-748397">
        <id>P50222</id>
    </interactant>
    <interactant intactId="EBI-751290">
        <id>Q92824</id>
        <label>PCSK5</label>
    </interactant>
    <organismsDiffer>false</organismsDiffer>
    <experiments>3</experiments>
</comment>
<comment type="interaction">
    <interactant intactId="EBI-748397">
        <id>P50222</id>
    </interactant>
    <interactant intactId="EBI-10290053">
        <id>Q96JS3</id>
        <label>PGBD1</label>
    </interactant>
    <organismsDiffer>false</organismsDiffer>
    <experiments>6</experiments>
</comment>
<comment type="interaction">
    <interactant intactId="EBI-748397">
        <id>P50222</id>
    </interactant>
    <interactant intactId="EBI-714158">
        <id>Q13526</id>
        <label>PIN1</label>
    </interactant>
    <organismsDiffer>false</organismsDiffer>
    <experiments>3</experiments>
</comment>
<comment type="interaction">
    <interactant intactId="EBI-748397">
        <id>P50222</id>
    </interactant>
    <interactant intactId="EBI-10243311">
        <id>Q549H9</id>
        <label>PKIG</label>
    </interactant>
    <organismsDiffer>false</organismsDiffer>
    <experiments>3</experiments>
</comment>
<comment type="interaction">
    <interactant intactId="EBI-748397">
        <id>P50222</id>
    </interactant>
    <interactant intactId="EBI-10172978">
        <id>A1L4L9</id>
        <label>POM121C</label>
    </interactant>
    <organismsDiffer>false</organismsDiffer>
    <experiments>3</experiments>
</comment>
<comment type="interaction">
    <interactant intactId="EBI-748397">
        <id>P50222</id>
    </interactant>
    <interactant intactId="EBI-1053424">
        <id>O43741</id>
        <label>PRKAB2</label>
    </interactant>
    <organismsDiffer>false</organismsDiffer>
    <experiments>3</experiments>
</comment>
<comment type="interaction">
    <interactant intactId="EBI-748397">
        <id>P50222</id>
    </interactant>
    <interactant intactId="EBI-10174045">
        <id>A6NJB7</id>
        <label>PRR19</label>
    </interactant>
    <organismsDiffer>false</organismsDiffer>
    <experiments>3</experiments>
</comment>
<comment type="interaction">
    <interactant intactId="EBI-748397">
        <id>P50222</id>
    </interactant>
    <interactant intactId="EBI-603329">
        <id>P40306</id>
        <label>PSMB10</label>
    </interactant>
    <organismsDiffer>false</organismsDiffer>
    <experiments>3</experiments>
</comment>
<comment type="interaction">
    <interactant intactId="EBI-748397">
        <id>P50222</id>
    </interactant>
    <interactant intactId="EBI-357598">
        <id>P62191</id>
        <label>PSMC1</label>
    </interactant>
    <organismsDiffer>false</organismsDiffer>
    <experiments>3</experiments>
</comment>
<comment type="interaction">
    <interactant intactId="EBI-748397">
        <id>P50222</id>
    </interactant>
    <interactant intactId="EBI-10242995">
        <id>Q53XL8</id>
        <label>PSMC1</label>
    </interactant>
    <organismsDiffer>false</organismsDiffer>
    <experiments>3</experiments>
</comment>
<comment type="interaction">
    <interactant intactId="EBI-748397">
        <id>P50222</id>
    </interactant>
    <interactant intactId="EBI-722193">
        <id>O00487</id>
        <label>PSMD14</label>
    </interactant>
    <organismsDiffer>false</organismsDiffer>
    <experiments>3</experiments>
</comment>
<comment type="interaction">
    <interactant intactId="EBI-748397">
        <id>P50222</id>
    </interactant>
    <interactant intactId="EBI-10234038">
        <id>P43115-12</id>
        <label>PTGER3</label>
    </interactant>
    <organismsDiffer>false</organismsDiffer>
    <experiments>3</experiments>
</comment>
<comment type="interaction">
    <interactant intactId="EBI-748397">
        <id>P50222</id>
    </interactant>
    <interactant intactId="EBI-8583223">
        <id>P10826-2</id>
        <label>RARB</label>
    </interactant>
    <organismsDiffer>false</organismsDiffer>
    <experiments>3</experiments>
</comment>
<comment type="interaction">
    <interactant intactId="EBI-748397">
        <id>P50222</id>
    </interactant>
    <interactant intactId="EBI-947779">
        <id>Q96PM5</id>
        <label>RCHY1</label>
    </interactant>
    <organismsDiffer>false</organismsDiffer>
    <experiments>3</experiments>
</comment>
<comment type="interaction">
    <interactant intactId="EBI-748397">
        <id>P50222</id>
    </interactant>
    <interactant intactId="EBI-10253121">
        <id>Q6P9E2</id>
        <label>RECK</label>
    </interactant>
    <organismsDiffer>false</organismsDiffer>
    <experiments>3</experiments>
</comment>
<comment type="interaction">
    <interactant intactId="EBI-748397">
        <id>P50222</id>
    </interactant>
    <interactant intactId="EBI-6285694">
        <id>Q9H4E5</id>
        <label>RHOJ</label>
    </interactant>
    <organismsDiffer>false</organismsDiffer>
    <experiments>3</experiments>
</comment>
<comment type="interaction">
    <interactant intactId="EBI-748397">
        <id>P50222</id>
    </interactant>
    <interactant intactId="EBI-2797992">
        <id>Q9H871</id>
        <label>RMND5A</label>
    </interactant>
    <organismsDiffer>false</organismsDiffer>
    <experiments>3</experiments>
</comment>
<comment type="interaction">
    <interactant intactId="EBI-748397">
        <id>P50222</id>
    </interactant>
    <interactant intactId="EBI-443462">
        <id>P61313</id>
        <label>RPL15</label>
    </interactant>
    <organismsDiffer>false</organismsDiffer>
    <experiments>3</experiments>
</comment>
<comment type="interaction">
    <interactant intactId="EBI-748397">
        <id>P50222</id>
    </interactant>
    <interactant intactId="EBI-10224192">
        <id>Q06455-4</id>
        <label>RUNX1T1</label>
    </interactant>
    <organismsDiffer>false</organismsDiffer>
    <experiments>3</experiments>
</comment>
<comment type="interaction">
    <interactant intactId="EBI-748397">
        <id>P50222</id>
    </interactant>
    <interactant intactId="EBI-748391">
        <id>Q9BWG6</id>
        <label>SCNM1</label>
    </interactant>
    <organismsDiffer>false</organismsDiffer>
    <experiments>3</experiments>
</comment>
<comment type="interaction">
    <interactant intactId="EBI-748397">
        <id>P50222</id>
    </interactant>
    <interactant intactId="EBI-1053182">
        <id>Q01105</id>
        <label>SET</label>
    </interactant>
    <organismsDiffer>false</organismsDiffer>
    <experiments>3</experiments>
</comment>
<comment type="interaction">
    <interactant intactId="EBI-748397">
        <id>P50222</id>
    </interactant>
    <interactant intactId="EBI-10313866">
        <id>Q9NUL5</id>
        <label>SHFL</label>
    </interactant>
    <organismsDiffer>false</organismsDiffer>
    <experiments>3</experiments>
</comment>
<comment type="interaction">
    <interactant intactId="EBI-748397">
        <id>P50222</id>
    </interactant>
    <interactant intactId="EBI-10179231">
        <id>O00241-2</id>
        <label>SIRPB1</label>
    </interactant>
    <organismsDiffer>false</organismsDiffer>
    <experiments>3</experiments>
</comment>
<comment type="interaction">
    <interactant intactId="EBI-748397">
        <id>P50222</id>
    </interactant>
    <interactant intactId="EBI-1222191">
        <id>Q6P1K1</id>
        <label>SLC48A1</label>
    </interactant>
    <organismsDiffer>false</organismsDiffer>
    <experiments>3</experiments>
</comment>
<comment type="interaction">
    <interactant intactId="EBI-748397">
        <id>P50222</id>
    </interactant>
    <interactant intactId="EBI-347161">
        <id>P84022</id>
        <label>SMAD3</label>
    </interactant>
    <organismsDiffer>false</organismsDiffer>
    <experiments>6</experiments>
</comment>
<comment type="interaction">
    <interactant intactId="EBI-748397">
        <id>P50222</id>
    </interactant>
    <interactant intactId="EBI-455078">
        <id>Q969G3</id>
        <label>SMARCE1</label>
    </interactant>
    <organismsDiffer>false</organismsDiffer>
    <experiments>3</experiments>
</comment>
<comment type="interaction">
    <interactant intactId="EBI-748397">
        <id>P50222</id>
    </interactant>
    <interactant intactId="EBI-723648">
        <id>P10451</id>
        <label>SPP1</label>
    </interactant>
    <organismsDiffer>false</organismsDiffer>
    <experiments>3</experiments>
</comment>
<comment type="interaction">
    <interactant intactId="EBI-748397">
        <id>P50222</id>
    </interactant>
    <interactant intactId="EBI-3866665">
        <id>O43609</id>
        <label>SPRY1</label>
    </interactant>
    <organismsDiffer>false</organismsDiffer>
    <experiments>4</experiments>
</comment>
<comment type="interaction">
    <interactant intactId="EBI-748397">
        <id>P50222</id>
    </interactant>
    <interactant intactId="EBI-742487">
        <id>O43597</id>
        <label>SPRY2</label>
    </interactant>
    <organismsDiffer>false</organismsDiffer>
    <experiments>3</experiments>
</comment>
<comment type="interaction">
    <interactant intactId="EBI-748397">
        <id>P50222</id>
    </interactant>
    <interactant intactId="EBI-10295431">
        <id>Q99909</id>
        <label>SSX3</label>
    </interactant>
    <organismsDiffer>false</organismsDiffer>
    <experiments>3</experiments>
</comment>
<comment type="interaction">
    <interactant intactId="EBI-748397">
        <id>P50222</id>
    </interactant>
    <interactant intactId="EBI-749295">
        <id>O75716</id>
        <label>STK16</label>
    </interactant>
    <organismsDiffer>false</organismsDiffer>
    <experiments>3</experiments>
</comment>
<comment type="interaction">
    <interactant intactId="EBI-748397">
        <id>P50222</id>
    </interactant>
    <interactant intactId="EBI-714135">
        <id>O75558</id>
        <label>STX11</label>
    </interactant>
    <organismsDiffer>false</organismsDiffer>
    <experiments>3</experiments>
</comment>
<comment type="interaction">
    <interactant intactId="EBI-748397">
        <id>P50222</id>
    </interactant>
    <interactant intactId="EBI-2853548">
        <id>O14662</id>
        <label>STX16</label>
    </interactant>
    <organismsDiffer>false</organismsDiffer>
    <experiments>3</experiments>
</comment>
<comment type="interaction">
    <interactant intactId="EBI-748397">
        <id>P50222</id>
    </interactant>
    <interactant intactId="EBI-960169">
        <id>P61764</id>
        <label>STXBP1</label>
    </interactant>
    <organismsDiffer>false</organismsDiffer>
    <experiments>3</experiments>
</comment>
<comment type="interaction">
    <interactant intactId="EBI-748397">
        <id>P50222</id>
    </interactant>
    <interactant intactId="EBI-745392">
        <id>Q9BSW7</id>
        <label>SYT17</label>
    </interactant>
    <organismsDiffer>false</organismsDiffer>
    <experiments>3</experiments>
</comment>
<comment type="interaction">
    <interactant intactId="EBI-748397">
        <id>P50222</id>
    </interactant>
    <interactant intactId="EBI-10244795">
        <id>Q5QJ74</id>
        <label>TBCEL</label>
    </interactant>
    <organismsDiffer>false</organismsDiffer>
    <experiments>3</experiments>
</comment>
<comment type="interaction">
    <interactant intactId="EBI-748397">
        <id>P50222</id>
    </interactant>
    <interactant intactId="EBI-710310">
        <id>Q15560</id>
        <label>TCEA2</label>
    </interactant>
    <organismsDiffer>false</organismsDiffer>
    <experiments>3</experiments>
</comment>
<comment type="interaction">
    <interactant intactId="EBI-748397">
        <id>P50222</id>
    </interactant>
    <interactant intactId="EBI-779636">
        <id>P01137</id>
        <label>TGFB1</label>
    </interactant>
    <organismsDiffer>false</organismsDiffer>
    <experiments>3</experiments>
</comment>
<comment type="interaction">
    <interactant intactId="EBI-748397">
        <id>P50222</id>
    </interactant>
    <interactant intactId="EBI-525927">
        <id>Q86XR7</id>
        <label>TICAM2</label>
    </interactant>
    <organismsDiffer>false</organismsDiffer>
    <experiments>3</experiments>
</comment>
<comment type="interaction">
    <interactant intactId="EBI-748397">
        <id>P50222</id>
    </interactant>
    <interactant intactId="EBI-8644968">
        <id>Q9NV29</id>
        <label>TMEM100</label>
    </interactant>
    <organismsDiffer>false</organismsDiffer>
    <experiments>3</experiments>
</comment>
<comment type="interaction">
    <interactant intactId="EBI-748397">
        <id>P50222</id>
    </interactant>
    <interactant intactId="EBI-396540">
        <id>Q12888</id>
        <label>TP53BP1</label>
    </interactant>
    <organismsDiffer>false</organismsDiffer>
    <experiments>3</experiments>
</comment>
<comment type="interaction">
    <interactant intactId="EBI-748397">
        <id>P50222</id>
    </interactant>
    <interactant intactId="EBI-359276">
        <id>Q9Y4K3</id>
        <label>TRAF6</label>
    </interactant>
    <organismsDiffer>false</organismsDiffer>
    <experiments>3</experiments>
</comment>
<comment type="interaction">
    <interactant intactId="EBI-748397">
        <id>P50222</id>
    </interactant>
    <interactant intactId="EBI-725997">
        <id>Q8WV44</id>
        <label>TRIM41</label>
    </interactant>
    <organismsDiffer>false</organismsDiffer>
    <experiments>3</experiments>
</comment>
<comment type="interaction">
    <interactant intactId="EBI-748397">
        <id>P50222</id>
    </interactant>
    <interactant intactId="EBI-5235829">
        <id>Q8IWZ5</id>
        <label>TRIM42</label>
    </interactant>
    <organismsDiffer>false</organismsDiffer>
    <experiments>3</experiments>
</comment>
<comment type="interaction">
    <interactant intactId="EBI-748397">
        <id>P50222</id>
    </interactant>
    <interactant intactId="EBI-10247626">
        <id>Q5VTQ0-4</id>
        <label>TTC39B</label>
    </interactant>
    <organismsDiffer>false</organismsDiffer>
    <experiments>3</experiments>
</comment>
<comment type="interaction">
    <interactant intactId="EBI-748397">
        <id>P50222</id>
    </interactant>
    <interactant intactId="EBI-2851213">
        <id>Q8N5M4</id>
        <label>TTC9C</label>
    </interactant>
    <organismsDiffer>false</organismsDiffer>
    <experiments>3</experiments>
</comment>
<comment type="interaction">
    <interactant intactId="EBI-748397">
        <id>P50222</id>
    </interactant>
    <interactant intactId="EBI-359793">
        <id>P40222</id>
        <label>TXLNA</label>
    </interactant>
    <organismsDiffer>false</organismsDiffer>
    <experiments>3</experiments>
</comment>
<comment type="interaction">
    <interactant intactId="EBI-748397">
        <id>P50222</id>
    </interactant>
    <interactant intactId="EBI-356983">
        <id>P11441</id>
        <label>UBL4A</label>
    </interactant>
    <organismsDiffer>false</organismsDiffer>
    <experiments>3</experiments>
</comment>
<comment type="interaction">
    <interactant intactId="EBI-748397">
        <id>P50222</id>
    </interactant>
    <interactant intactId="EBI-10267507">
        <id>Q8N7F7</id>
        <label>UBL4B</label>
    </interactant>
    <organismsDiffer>false</organismsDiffer>
    <experiments>3</experiments>
</comment>
<comment type="interaction">
    <interactant intactId="EBI-748397">
        <id>P50222</id>
    </interactant>
    <interactant intactId="EBI-1048763">
        <id>Q9H3U1</id>
        <label>UNC45A</label>
    </interactant>
    <organismsDiffer>false</organismsDiffer>
    <experiments>3</experiments>
</comment>
<comment type="interaction">
    <interactant intactId="EBI-748397">
        <id>P50222</id>
    </interactant>
    <interactant intactId="EBI-742842">
        <id>Q9NZ43</id>
        <label>USE1</label>
    </interactant>
    <organismsDiffer>false</organismsDiffer>
    <experiments>3</experiments>
</comment>
<comment type="interaction">
    <interactant intactId="EBI-748397">
        <id>P50222</id>
    </interactant>
    <interactant intactId="EBI-286357">
        <id>P11473</id>
        <label>VDR</label>
    </interactant>
    <organismsDiffer>false</organismsDiffer>
    <experiments>3</experiments>
</comment>
<comment type="interaction">
    <interactant intactId="EBI-748397">
        <id>P50222</id>
    </interactant>
    <interactant intactId="EBI-10270812">
        <id>Q8NEX5</id>
        <label>WFDC9</label>
    </interactant>
    <organismsDiffer>false</organismsDiffer>
    <experiments>3</experiments>
</comment>
<comment type="interaction">
    <interactant intactId="EBI-748397">
        <id>P50222</id>
    </interactant>
    <interactant intactId="EBI-3918457">
        <id>O43543</id>
        <label>XRCC2</label>
    </interactant>
    <organismsDiffer>false</organismsDiffer>
    <experiments>3</experiments>
</comment>
<comment type="interaction">
    <interactant intactId="EBI-748397">
        <id>P50222</id>
    </interactant>
    <interactant intactId="EBI-2860059">
        <id>O75132</id>
        <label>ZBED4</label>
    </interactant>
    <organismsDiffer>false</organismsDiffer>
    <experiments>3</experiments>
</comment>
<comment type="interaction">
    <interactant intactId="EBI-748397">
        <id>P50222</id>
    </interactant>
    <interactant intactId="EBI-2682299">
        <id>Q96NC0</id>
        <label>ZMAT2</label>
    </interactant>
    <organismsDiffer>false</organismsDiffer>
    <experiments>3</experiments>
</comment>
<comment type="interaction">
    <interactant intactId="EBI-748397">
        <id>P50222</id>
    </interactant>
    <interactant intactId="EBI-2555767">
        <id>Q15973</id>
        <label>ZNF124</label>
    </interactant>
    <organismsDiffer>false</organismsDiffer>
    <experiments>3</experiments>
</comment>
<comment type="interaction">
    <interactant intactId="EBI-748397">
        <id>P50222</id>
    </interactant>
    <interactant intactId="EBI-7233259">
        <id>Q86UD4</id>
        <label>ZNF329</label>
    </interactant>
    <organismsDiffer>false</organismsDiffer>
    <experiments>3</experiments>
</comment>
<comment type="interaction">
    <interactant intactId="EBI-748397">
        <id>P50222</id>
    </interactant>
    <interactant intactId="EBI-10241626">
        <id>Q494X3</id>
        <label>ZNF404</label>
    </interactant>
    <organismsDiffer>false</organismsDiffer>
    <experiments>3</experiments>
</comment>
<comment type="interaction">
    <interactant intactId="EBI-748397">
        <id>P50222</id>
    </interactant>
    <interactant intactId="EBI-740727">
        <id>Q8TAU3</id>
        <label>ZNF417</label>
    </interactant>
    <organismsDiffer>false</organismsDiffer>
    <experiments>3</experiments>
</comment>
<comment type="interaction">
    <interactant intactId="EBI-748397">
        <id>P50222</id>
    </interactant>
    <interactant intactId="EBI-10196963">
        <id>Q6P088</id>
        <label>ZNF483</label>
    </interactant>
    <organismsDiffer>false</organismsDiffer>
    <experiments>3</experiments>
</comment>
<comment type="interaction">
    <interactant intactId="EBI-748397">
        <id>P50222</id>
    </interactant>
    <interactant intactId="EBI-10273713">
        <id>Q8TBZ8</id>
        <label>ZNF564</label>
    </interactant>
    <organismsDiffer>false</organismsDiffer>
    <experiments>3</experiments>
</comment>
<comment type="interaction">
    <interactant intactId="EBI-748397">
        <id>P50222</id>
    </interactant>
    <interactant intactId="EBI-10172590">
        <id>Q7Z3I7</id>
        <label>ZNF572</label>
    </interactant>
    <organismsDiffer>false</organismsDiffer>
    <experiments>3</experiments>
</comment>
<comment type="interaction">
    <interactant intactId="EBI-748397">
        <id>P50222</id>
    </interactant>
    <interactant intactId="EBI-6427977">
        <id>Q96SQ5</id>
        <label>ZNF587</label>
    </interactant>
    <organismsDiffer>false</organismsDiffer>
    <experiments>3</experiments>
</comment>
<comment type="interaction">
    <interactant intactId="EBI-748397">
        <id>P50222</id>
    </interactant>
    <interactant intactId="EBI-10261951">
        <id>Q8IW36</id>
        <label>ZNF695</label>
    </interactant>
    <organismsDiffer>false</organismsDiffer>
    <experiments>3</experiments>
</comment>
<comment type="interaction">
    <interactant intactId="EBI-748397">
        <id>P50222</id>
    </interactant>
    <interactant intactId="EBI-10255586">
        <id>Q6ZVW3</id>
    </interactant>
    <organismsDiffer>false</organismsDiffer>
    <experiments>3</experiments>
</comment>
<comment type="interaction">
    <interactant intactId="EBI-748397">
        <id>P50222</id>
    </interactant>
    <interactant intactId="EBI-9088990">
        <id>Q7Z783</id>
    </interactant>
    <organismsDiffer>false</organismsDiffer>
    <experiments>3</experiments>
</comment>
<comment type="interaction">
    <interactant intactId="EBI-748397">
        <id>P50222</id>
    </interactant>
    <interactant intactId="EBI-10315029">
        <id>Q9NWJ2</id>
    </interactant>
    <organismsDiffer>false</organismsDiffer>
    <experiments>3</experiments>
</comment>
<comment type="subcellular location">
    <subcellularLocation>
        <location evidence="10 13">Nucleus</location>
    </subcellularLocation>
    <subcellularLocation>
        <location evidence="10">Nucleus speckle</location>
    </subcellularLocation>
</comment>
<comment type="induction">
    <text evidence="12">Expression is repressed by ZEB2.</text>
</comment>
<comment type="domain">
    <text evidence="10">The polyhistidine repeat may act as a targeting signal to nuclear speckles.</text>
</comment>
<comment type="polymorphism">
    <text evidence="11">The poly-His region of MEOX2 is polymorphic and the number of His varies in the population.</text>
</comment>
<organism>
    <name type="scientific">Homo sapiens</name>
    <name type="common">Human</name>
    <dbReference type="NCBI Taxonomy" id="9606"/>
    <lineage>
        <taxon>Eukaryota</taxon>
        <taxon>Metazoa</taxon>
        <taxon>Chordata</taxon>
        <taxon>Craniata</taxon>
        <taxon>Vertebrata</taxon>
        <taxon>Euteleostomi</taxon>
        <taxon>Mammalia</taxon>
        <taxon>Eutheria</taxon>
        <taxon>Euarchontoglires</taxon>
        <taxon>Primates</taxon>
        <taxon>Haplorrhini</taxon>
        <taxon>Catarrhini</taxon>
        <taxon>Hominidae</taxon>
        <taxon>Homo</taxon>
    </lineage>
</organism>
<name>MEOX2_HUMAN</name>